<organism>
    <name type="scientific">Bifidobacterium longum (strain DJO10A)</name>
    <dbReference type="NCBI Taxonomy" id="205913"/>
    <lineage>
        <taxon>Bacteria</taxon>
        <taxon>Bacillati</taxon>
        <taxon>Actinomycetota</taxon>
        <taxon>Actinomycetes</taxon>
        <taxon>Bifidobacteriales</taxon>
        <taxon>Bifidobacteriaceae</taxon>
        <taxon>Bifidobacterium</taxon>
    </lineage>
</organism>
<gene>
    <name evidence="1" type="primary">ispE</name>
    <name type="ordered locus">BLD_1451</name>
</gene>
<comment type="function">
    <text evidence="1">Catalyzes the phosphorylation of the position 2 hydroxy group of 4-diphosphocytidyl-2C-methyl-D-erythritol.</text>
</comment>
<comment type="catalytic activity">
    <reaction evidence="1">
        <text>4-CDP-2-C-methyl-D-erythritol + ATP = 4-CDP-2-C-methyl-D-erythritol 2-phosphate + ADP + H(+)</text>
        <dbReference type="Rhea" id="RHEA:18437"/>
        <dbReference type="ChEBI" id="CHEBI:15378"/>
        <dbReference type="ChEBI" id="CHEBI:30616"/>
        <dbReference type="ChEBI" id="CHEBI:57823"/>
        <dbReference type="ChEBI" id="CHEBI:57919"/>
        <dbReference type="ChEBI" id="CHEBI:456216"/>
        <dbReference type="EC" id="2.7.1.148"/>
    </reaction>
</comment>
<comment type="pathway">
    <text evidence="1">Isoprenoid biosynthesis; isopentenyl diphosphate biosynthesis via DXP pathway; isopentenyl diphosphate from 1-deoxy-D-xylulose 5-phosphate: step 3/6.</text>
</comment>
<comment type="similarity">
    <text evidence="1">Belongs to the GHMP kinase family. IspE subfamily.</text>
</comment>
<keyword id="KW-0067">ATP-binding</keyword>
<keyword id="KW-0414">Isoprene biosynthesis</keyword>
<keyword id="KW-0418">Kinase</keyword>
<keyword id="KW-0547">Nucleotide-binding</keyword>
<keyword id="KW-0808">Transferase</keyword>
<feature type="chain" id="PRO_1000092063" description="4-diphosphocytidyl-2-C-methyl-D-erythritol kinase">
    <location>
        <begin position="1"/>
        <end position="316"/>
    </location>
</feature>
<feature type="active site" evidence="1">
    <location>
        <position position="32"/>
    </location>
</feature>
<feature type="active site" evidence="1">
    <location>
        <position position="168"/>
    </location>
</feature>
<feature type="binding site" evidence="1">
    <location>
        <begin position="126"/>
        <end position="136"/>
    </location>
    <ligand>
        <name>ATP</name>
        <dbReference type="ChEBI" id="CHEBI:30616"/>
    </ligand>
</feature>
<name>ISPE_BIFLD</name>
<accession>B3DP37</accession>
<dbReference type="EC" id="2.7.1.148" evidence="1"/>
<dbReference type="EMBL" id="CP000605">
    <property type="protein sequence ID" value="ACD98896.1"/>
    <property type="molecule type" value="Genomic_DNA"/>
</dbReference>
<dbReference type="RefSeq" id="WP_010081218.1">
    <property type="nucleotide sequence ID" value="NC_010816.1"/>
</dbReference>
<dbReference type="SMR" id="B3DP37"/>
<dbReference type="KEGG" id="blj:BLD_1451"/>
<dbReference type="HOGENOM" id="CLU_053057_1_1_11"/>
<dbReference type="UniPathway" id="UPA00056">
    <property type="reaction ID" value="UER00094"/>
</dbReference>
<dbReference type="Proteomes" id="UP000002419">
    <property type="component" value="Chromosome"/>
</dbReference>
<dbReference type="GO" id="GO:0050515">
    <property type="term" value="F:4-(cytidine 5'-diphospho)-2-C-methyl-D-erythritol kinase activity"/>
    <property type="evidence" value="ECO:0007669"/>
    <property type="project" value="UniProtKB-UniRule"/>
</dbReference>
<dbReference type="GO" id="GO:0005524">
    <property type="term" value="F:ATP binding"/>
    <property type="evidence" value="ECO:0007669"/>
    <property type="project" value="UniProtKB-UniRule"/>
</dbReference>
<dbReference type="GO" id="GO:0019288">
    <property type="term" value="P:isopentenyl diphosphate biosynthetic process, methylerythritol 4-phosphate pathway"/>
    <property type="evidence" value="ECO:0007669"/>
    <property type="project" value="UniProtKB-UniRule"/>
</dbReference>
<dbReference type="GO" id="GO:0016114">
    <property type="term" value="P:terpenoid biosynthetic process"/>
    <property type="evidence" value="ECO:0007669"/>
    <property type="project" value="InterPro"/>
</dbReference>
<dbReference type="Gene3D" id="3.30.230.10">
    <property type="match status" value="1"/>
</dbReference>
<dbReference type="Gene3D" id="3.30.70.890">
    <property type="entry name" value="GHMP kinase, C-terminal domain"/>
    <property type="match status" value="1"/>
</dbReference>
<dbReference type="HAMAP" id="MF_00061">
    <property type="entry name" value="IspE"/>
    <property type="match status" value="1"/>
</dbReference>
<dbReference type="InterPro" id="IPR013750">
    <property type="entry name" value="GHMP_kinase_C_dom"/>
</dbReference>
<dbReference type="InterPro" id="IPR036554">
    <property type="entry name" value="GHMP_kinase_C_sf"/>
</dbReference>
<dbReference type="InterPro" id="IPR006204">
    <property type="entry name" value="GHMP_kinase_N_dom"/>
</dbReference>
<dbReference type="InterPro" id="IPR004424">
    <property type="entry name" value="IspE"/>
</dbReference>
<dbReference type="InterPro" id="IPR020568">
    <property type="entry name" value="Ribosomal_Su5_D2-typ_SF"/>
</dbReference>
<dbReference type="InterPro" id="IPR014721">
    <property type="entry name" value="Ribsml_uS5_D2-typ_fold_subgr"/>
</dbReference>
<dbReference type="PANTHER" id="PTHR43527">
    <property type="entry name" value="4-DIPHOSPHOCYTIDYL-2-C-METHYL-D-ERYTHRITOL KINASE, CHLOROPLASTIC"/>
    <property type="match status" value="1"/>
</dbReference>
<dbReference type="PANTHER" id="PTHR43527:SF2">
    <property type="entry name" value="4-DIPHOSPHOCYTIDYL-2-C-METHYL-D-ERYTHRITOL KINASE, CHLOROPLASTIC"/>
    <property type="match status" value="1"/>
</dbReference>
<dbReference type="Pfam" id="PF08544">
    <property type="entry name" value="GHMP_kinases_C"/>
    <property type="match status" value="1"/>
</dbReference>
<dbReference type="Pfam" id="PF00288">
    <property type="entry name" value="GHMP_kinases_N"/>
    <property type="match status" value="1"/>
</dbReference>
<dbReference type="PIRSF" id="PIRSF010376">
    <property type="entry name" value="IspE"/>
    <property type="match status" value="1"/>
</dbReference>
<dbReference type="SUPFAM" id="SSF55060">
    <property type="entry name" value="GHMP Kinase, C-terminal domain"/>
    <property type="match status" value="1"/>
</dbReference>
<dbReference type="SUPFAM" id="SSF54211">
    <property type="entry name" value="Ribosomal protein S5 domain 2-like"/>
    <property type="match status" value="1"/>
</dbReference>
<reference key="1">
    <citation type="journal article" date="2008" name="BMC Genomics">
        <title>Comparative genomic analysis of the gut bacterium Bifidobacterium longum reveals loci susceptible to deletion during pure culture growth.</title>
        <authorList>
            <person name="Lee J.H."/>
            <person name="Karamychev V.N."/>
            <person name="Kozyavkin S.A."/>
            <person name="Mills D."/>
            <person name="Pavlov A.R."/>
            <person name="Pavlova N.V."/>
            <person name="Polouchine N.N."/>
            <person name="Richardson P.M."/>
            <person name="Shakhova V.V."/>
            <person name="Slesarev A.I."/>
            <person name="Weimer B."/>
            <person name="O'Sullivan D.J."/>
        </authorList>
    </citation>
    <scope>NUCLEOTIDE SEQUENCE [LARGE SCALE GENOMIC DNA]</scope>
    <source>
        <strain>DJO10A</strain>
    </source>
</reference>
<evidence type="ECO:0000255" key="1">
    <source>
        <dbReference type="HAMAP-Rule" id="MF_00061"/>
    </source>
</evidence>
<sequence length="316" mass="33274">MSPVISHPRSAAARHQSDELSPITITVDCPAKTNLTLEVGPAHDEWGGRHELDTTYCAIGVYDTVTATAKQPGAGFSLELEGAYLGDLASSRSDMRRNHAVLALFAMAQAAEREPDVALTITKRIPVGAGLGGGSADAAATMLAVNRLWELNWPIERLRTIAATLGADMPFCLTGGLAYGTGFGERITDIAPGSRDELALIEQGFSGEVLVGAYQSQLSTPEVYHTFDIVGAAEGDRNHLQAAAISLHPRSGQAIDAATQAGASHAFVSGSGPSVVAFAADEAAAQRIIEVWRDTAVVDRIIRAKSPEHPNISVRQ</sequence>
<protein>
    <recommendedName>
        <fullName evidence="1">4-diphosphocytidyl-2-C-methyl-D-erythritol kinase</fullName>
        <shortName evidence="1">CMK</shortName>
        <ecNumber evidence="1">2.7.1.148</ecNumber>
    </recommendedName>
    <alternativeName>
        <fullName evidence="1">4-(cytidine-5'-diphospho)-2-C-methyl-D-erythritol kinase</fullName>
    </alternativeName>
</protein>
<proteinExistence type="inferred from homology"/>